<evidence type="ECO:0000255" key="1">
    <source>
        <dbReference type="HAMAP-Rule" id="MF_01343"/>
    </source>
</evidence>
<evidence type="ECO:0000305" key="2"/>
<sequence length="88" mass="10314">MLVTEKKQEIVNAHKLHDSDTGSPEVQIALLSERITYLTEHFKTHKKDHHSRRGLLKIVGQRRGLLDYLKKKDVERYKSIIAKLGIRR</sequence>
<organism>
    <name type="scientific">Geobacter sp. (strain M21)</name>
    <dbReference type="NCBI Taxonomy" id="443144"/>
    <lineage>
        <taxon>Bacteria</taxon>
        <taxon>Pseudomonadati</taxon>
        <taxon>Thermodesulfobacteriota</taxon>
        <taxon>Desulfuromonadia</taxon>
        <taxon>Geobacterales</taxon>
        <taxon>Geobacteraceae</taxon>
        <taxon>Geobacter</taxon>
    </lineage>
</organism>
<comment type="function">
    <text evidence="1">One of the primary rRNA binding proteins, it binds directly to 16S rRNA where it helps nucleate assembly of the platform of the 30S subunit by binding and bridging several RNA helices of the 16S rRNA.</text>
</comment>
<comment type="function">
    <text evidence="1">Forms an intersubunit bridge (bridge B4) with the 23S rRNA of the 50S subunit in the ribosome.</text>
</comment>
<comment type="subunit">
    <text evidence="1">Part of the 30S ribosomal subunit. Forms a bridge to the 50S subunit in the 70S ribosome, contacting the 23S rRNA.</text>
</comment>
<comment type="similarity">
    <text evidence="1">Belongs to the universal ribosomal protein uS15 family.</text>
</comment>
<accession>C6E2P6</accession>
<protein>
    <recommendedName>
        <fullName evidence="1">Small ribosomal subunit protein uS15</fullName>
    </recommendedName>
    <alternativeName>
        <fullName evidence="2">30S ribosomal protein S15</fullName>
    </alternativeName>
</protein>
<proteinExistence type="inferred from homology"/>
<dbReference type="EMBL" id="CP001661">
    <property type="protein sequence ID" value="ACT19006.1"/>
    <property type="molecule type" value="Genomic_DNA"/>
</dbReference>
<dbReference type="SMR" id="C6E2P6"/>
<dbReference type="STRING" id="443144.GM21_2977"/>
<dbReference type="KEGG" id="gem:GM21_2977"/>
<dbReference type="eggNOG" id="COG0184">
    <property type="taxonomic scope" value="Bacteria"/>
</dbReference>
<dbReference type="HOGENOM" id="CLU_148518_0_0_7"/>
<dbReference type="OrthoDB" id="9799262at2"/>
<dbReference type="GO" id="GO:0022627">
    <property type="term" value="C:cytosolic small ribosomal subunit"/>
    <property type="evidence" value="ECO:0007669"/>
    <property type="project" value="TreeGrafter"/>
</dbReference>
<dbReference type="GO" id="GO:0019843">
    <property type="term" value="F:rRNA binding"/>
    <property type="evidence" value="ECO:0007669"/>
    <property type="project" value="UniProtKB-UniRule"/>
</dbReference>
<dbReference type="GO" id="GO:0003735">
    <property type="term" value="F:structural constituent of ribosome"/>
    <property type="evidence" value="ECO:0007669"/>
    <property type="project" value="InterPro"/>
</dbReference>
<dbReference type="GO" id="GO:0006412">
    <property type="term" value="P:translation"/>
    <property type="evidence" value="ECO:0007669"/>
    <property type="project" value="UniProtKB-UniRule"/>
</dbReference>
<dbReference type="CDD" id="cd00353">
    <property type="entry name" value="Ribosomal_S15p_S13e"/>
    <property type="match status" value="1"/>
</dbReference>
<dbReference type="FunFam" id="1.10.287.10:FF:000002">
    <property type="entry name" value="30S ribosomal protein S15"/>
    <property type="match status" value="1"/>
</dbReference>
<dbReference type="Gene3D" id="6.10.250.3130">
    <property type="match status" value="1"/>
</dbReference>
<dbReference type="Gene3D" id="1.10.287.10">
    <property type="entry name" value="S15/NS1, RNA-binding"/>
    <property type="match status" value="1"/>
</dbReference>
<dbReference type="HAMAP" id="MF_01343_B">
    <property type="entry name" value="Ribosomal_uS15_B"/>
    <property type="match status" value="1"/>
</dbReference>
<dbReference type="InterPro" id="IPR000589">
    <property type="entry name" value="Ribosomal_uS15"/>
</dbReference>
<dbReference type="InterPro" id="IPR005290">
    <property type="entry name" value="Ribosomal_uS15_bac-type"/>
</dbReference>
<dbReference type="InterPro" id="IPR009068">
    <property type="entry name" value="uS15_NS1_RNA-bd_sf"/>
</dbReference>
<dbReference type="NCBIfam" id="TIGR00952">
    <property type="entry name" value="S15_bact"/>
    <property type="match status" value="1"/>
</dbReference>
<dbReference type="PANTHER" id="PTHR23321">
    <property type="entry name" value="RIBOSOMAL PROTEIN S15, BACTERIAL AND ORGANELLAR"/>
    <property type="match status" value="1"/>
</dbReference>
<dbReference type="PANTHER" id="PTHR23321:SF26">
    <property type="entry name" value="SMALL RIBOSOMAL SUBUNIT PROTEIN US15M"/>
    <property type="match status" value="1"/>
</dbReference>
<dbReference type="Pfam" id="PF00312">
    <property type="entry name" value="Ribosomal_S15"/>
    <property type="match status" value="1"/>
</dbReference>
<dbReference type="SMART" id="SM01387">
    <property type="entry name" value="Ribosomal_S15"/>
    <property type="match status" value="1"/>
</dbReference>
<dbReference type="SUPFAM" id="SSF47060">
    <property type="entry name" value="S15/NS1 RNA-binding domain"/>
    <property type="match status" value="1"/>
</dbReference>
<dbReference type="PROSITE" id="PS00362">
    <property type="entry name" value="RIBOSOMAL_S15"/>
    <property type="match status" value="1"/>
</dbReference>
<feature type="chain" id="PRO_1000214759" description="Small ribosomal subunit protein uS15">
    <location>
        <begin position="1"/>
        <end position="88"/>
    </location>
</feature>
<gene>
    <name evidence="1" type="primary">rpsO</name>
    <name type="ordered locus">GM21_2977</name>
</gene>
<reference key="1">
    <citation type="submission" date="2009-07" db="EMBL/GenBank/DDBJ databases">
        <title>Complete sequence of Geobacter sp. M21.</title>
        <authorList>
            <consortium name="US DOE Joint Genome Institute"/>
            <person name="Lucas S."/>
            <person name="Copeland A."/>
            <person name="Lapidus A."/>
            <person name="Glavina del Rio T."/>
            <person name="Dalin E."/>
            <person name="Tice H."/>
            <person name="Bruce D."/>
            <person name="Goodwin L."/>
            <person name="Pitluck S."/>
            <person name="Saunders E."/>
            <person name="Brettin T."/>
            <person name="Detter J.C."/>
            <person name="Han C."/>
            <person name="Larimer F."/>
            <person name="Land M."/>
            <person name="Hauser L."/>
            <person name="Kyrpides N."/>
            <person name="Ovchinnikova G."/>
            <person name="Lovley D."/>
        </authorList>
    </citation>
    <scope>NUCLEOTIDE SEQUENCE [LARGE SCALE GENOMIC DNA]</scope>
    <source>
        <strain>M21</strain>
    </source>
</reference>
<name>RS15_GEOSM</name>
<keyword id="KW-0687">Ribonucleoprotein</keyword>
<keyword id="KW-0689">Ribosomal protein</keyword>
<keyword id="KW-0694">RNA-binding</keyword>
<keyword id="KW-0699">rRNA-binding</keyword>